<proteinExistence type="inferred from homology"/>
<gene>
    <name evidence="1" type="primary">clsA</name>
    <name type="synonym">cls</name>
    <name type="ordered locus">EcSMS35_1891</name>
</gene>
<evidence type="ECO:0000255" key="1">
    <source>
        <dbReference type="HAMAP-Rule" id="MF_00190"/>
    </source>
</evidence>
<organism>
    <name type="scientific">Escherichia coli (strain SMS-3-5 / SECEC)</name>
    <dbReference type="NCBI Taxonomy" id="439855"/>
    <lineage>
        <taxon>Bacteria</taxon>
        <taxon>Pseudomonadati</taxon>
        <taxon>Pseudomonadota</taxon>
        <taxon>Gammaproteobacteria</taxon>
        <taxon>Enterobacterales</taxon>
        <taxon>Enterobacteriaceae</taxon>
        <taxon>Escherichia</taxon>
    </lineage>
</organism>
<sequence>MTTVYTLVSWLAILGYWLLIAGVTLRILMKRRAVPSAMAWLLIIYILPLVGIIAYLAVGELHLGKRRAERARAMWPSTAKWLNDLKACKHIFAEENSSVAAPLFKLCERRQGIAGVKGNQLQLMTESDDVMQALIRDIQLARHNIEMVFYIWQPGGMADQVAESLMAAARRGIHCRLMLDSAGSVAFFRSPWPELMRNAGIEVVEALKVNLMRVFLRRMDLRQHRKMIMIDNYIAYTGSMNMVDPRYFKQDAGVGQWIDLMARMEGPIATAMGIIYSCDWEIETGKRILPPPPDVNIMPFEQASGHTIHTIASGPGFPEDLIHQALLTAAYSAREYLIMTTPYFVPSDDLLHAICTAAQRGVDVSIILPRKNDSMLVGWASRAFFTELLAAGVKIYQFEGGLLHTKSVLVDGELSLVGTVNLDMRSLWLNFEITLAIDDKGFGADLAAVQDDYISRSRLLDARLWLKRPLWQRVAERLFYFFSPLL</sequence>
<name>CLSA_ECOSM</name>
<comment type="function">
    <text evidence="1">Catalyzes the reversible phosphatidyl group transfer from one phosphatidylglycerol molecule to another to form cardiolipin (CL) (diphosphatidylglycerol) and glycerol.</text>
</comment>
<comment type="catalytic activity">
    <reaction evidence="1">
        <text>2 a 1,2-diacyl-sn-glycero-3-phospho-(1'-sn-glycerol) = a cardiolipin + glycerol</text>
        <dbReference type="Rhea" id="RHEA:31451"/>
        <dbReference type="ChEBI" id="CHEBI:17754"/>
        <dbReference type="ChEBI" id="CHEBI:62237"/>
        <dbReference type="ChEBI" id="CHEBI:64716"/>
    </reaction>
</comment>
<comment type="subcellular location">
    <subcellularLocation>
        <location evidence="1">Cell inner membrane</location>
        <topology evidence="1">Multi-pass membrane protein</topology>
    </subcellularLocation>
</comment>
<comment type="similarity">
    <text evidence="1">Belongs to the phospholipase D family. Cardiolipin synthase subfamily. ClsA sub-subfamily.</text>
</comment>
<protein>
    <recommendedName>
        <fullName evidence="1">Cardiolipin synthase A</fullName>
        <shortName evidence="1">CL synthase</shortName>
        <ecNumber evidence="1">2.7.8.-</ecNumber>
    </recommendedName>
</protein>
<accession>B1LH51</accession>
<keyword id="KW-0997">Cell inner membrane</keyword>
<keyword id="KW-1003">Cell membrane</keyword>
<keyword id="KW-0444">Lipid biosynthesis</keyword>
<keyword id="KW-0443">Lipid metabolism</keyword>
<keyword id="KW-0472">Membrane</keyword>
<keyword id="KW-0594">Phospholipid biosynthesis</keyword>
<keyword id="KW-1208">Phospholipid metabolism</keyword>
<keyword id="KW-0677">Repeat</keyword>
<keyword id="KW-0808">Transferase</keyword>
<keyword id="KW-0812">Transmembrane</keyword>
<keyword id="KW-1133">Transmembrane helix</keyword>
<dbReference type="EC" id="2.7.8.-" evidence="1"/>
<dbReference type="EMBL" id="CP000970">
    <property type="protein sequence ID" value="ACB19274.1"/>
    <property type="molecule type" value="Genomic_DNA"/>
</dbReference>
<dbReference type="RefSeq" id="WP_000214516.1">
    <property type="nucleotide sequence ID" value="NC_010498.1"/>
</dbReference>
<dbReference type="SMR" id="B1LH51"/>
<dbReference type="GeneID" id="93775314"/>
<dbReference type="KEGG" id="ecm:EcSMS35_1891"/>
<dbReference type="HOGENOM" id="CLU_038053_1_0_6"/>
<dbReference type="Proteomes" id="UP000007011">
    <property type="component" value="Chromosome"/>
</dbReference>
<dbReference type="GO" id="GO:0005886">
    <property type="term" value="C:plasma membrane"/>
    <property type="evidence" value="ECO:0007669"/>
    <property type="project" value="UniProtKB-SubCell"/>
</dbReference>
<dbReference type="GO" id="GO:0008808">
    <property type="term" value="F:cardiolipin synthase activity"/>
    <property type="evidence" value="ECO:0007669"/>
    <property type="project" value="InterPro"/>
</dbReference>
<dbReference type="GO" id="GO:0032049">
    <property type="term" value="P:cardiolipin biosynthetic process"/>
    <property type="evidence" value="ECO:0007669"/>
    <property type="project" value="InterPro"/>
</dbReference>
<dbReference type="CDD" id="cd09152">
    <property type="entry name" value="PLDc_EcCLS_like_1"/>
    <property type="match status" value="1"/>
</dbReference>
<dbReference type="CDD" id="cd09158">
    <property type="entry name" value="PLDc_EcCLS_like_2"/>
    <property type="match status" value="1"/>
</dbReference>
<dbReference type="FunFam" id="3.30.870.10:FF:000002">
    <property type="entry name" value="Cardiolipin synthase A"/>
    <property type="match status" value="1"/>
</dbReference>
<dbReference type="FunFam" id="3.30.870.10:FF:000003">
    <property type="entry name" value="Cardiolipin synthase A"/>
    <property type="match status" value="1"/>
</dbReference>
<dbReference type="Gene3D" id="3.30.870.10">
    <property type="entry name" value="Endonuclease Chain A"/>
    <property type="match status" value="2"/>
</dbReference>
<dbReference type="HAMAP" id="MF_00190">
    <property type="entry name" value="Cardiolipin_synth_ClsA"/>
    <property type="match status" value="1"/>
</dbReference>
<dbReference type="InterPro" id="IPR022924">
    <property type="entry name" value="Cardiolipin_synthase"/>
</dbReference>
<dbReference type="InterPro" id="IPR030840">
    <property type="entry name" value="CL_synthase_A"/>
</dbReference>
<dbReference type="InterPro" id="IPR027379">
    <property type="entry name" value="CLS_N"/>
</dbReference>
<dbReference type="InterPro" id="IPR025202">
    <property type="entry name" value="PLD-like_dom"/>
</dbReference>
<dbReference type="InterPro" id="IPR001736">
    <property type="entry name" value="PLipase_D/transphosphatidylase"/>
</dbReference>
<dbReference type="NCBIfam" id="TIGR04265">
    <property type="entry name" value="bac_cardiolipin"/>
    <property type="match status" value="1"/>
</dbReference>
<dbReference type="PANTHER" id="PTHR21248">
    <property type="entry name" value="CARDIOLIPIN SYNTHASE"/>
    <property type="match status" value="1"/>
</dbReference>
<dbReference type="PANTHER" id="PTHR21248:SF22">
    <property type="entry name" value="PHOSPHOLIPASE D"/>
    <property type="match status" value="1"/>
</dbReference>
<dbReference type="Pfam" id="PF13091">
    <property type="entry name" value="PLDc_2"/>
    <property type="match status" value="2"/>
</dbReference>
<dbReference type="Pfam" id="PF13396">
    <property type="entry name" value="PLDc_N"/>
    <property type="match status" value="1"/>
</dbReference>
<dbReference type="SMART" id="SM00155">
    <property type="entry name" value="PLDc"/>
    <property type="match status" value="2"/>
</dbReference>
<dbReference type="SUPFAM" id="SSF56024">
    <property type="entry name" value="Phospholipase D/nuclease"/>
    <property type="match status" value="2"/>
</dbReference>
<dbReference type="PROSITE" id="PS50035">
    <property type="entry name" value="PLD"/>
    <property type="match status" value="2"/>
</dbReference>
<feature type="chain" id="PRO_1000118590" description="Cardiolipin synthase A">
    <location>
        <begin position="1"/>
        <end position="486"/>
    </location>
</feature>
<feature type="transmembrane region" description="Helical" evidence="1">
    <location>
        <begin position="3"/>
        <end position="23"/>
    </location>
</feature>
<feature type="transmembrane region" description="Helical" evidence="1">
    <location>
        <begin position="38"/>
        <end position="58"/>
    </location>
</feature>
<feature type="domain" description="PLD phosphodiesterase 1" evidence="1">
    <location>
        <begin position="219"/>
        <end position="246"/>
    </location>
</feature>
<feature type="domain" description="PLD phosphodiesterase 2" evidence="1">
    <location>
        <begin position="399"/>
        <end position="426"/>
    </location>
</feature>
<feature type="active site" evidence="1">
    <location>
        <position position="224"/>
    </location>
</feature>
<feature type="active site" evidence="1">
    <location>
        <position position="226"/>
    </location>
</feature>
<feature type="active site" evidence="1">
    <location>
        <position position="231"/>
    </location>
</feature>
<feature type="active site" evidence="1">
    <location>
        <position position="404"/>
    </location>
</feature>
<feature type="active site" evidence="1">
    <location>
        <position position="406"/>
    </location>
</feature>
<feature type="active site" evidence="1">
    <location>
        <position position="411"/>
    </location>
</feature>
<reference key="1">
    <citation type="journal article" date="2008" name="J. Bacteriol.">
        <title>Insights into the environmental resistance gene pool from the genome sequence of the multidrug-resistant environmental isolate Escherichia coli SMS-3-5.</title>
        <authorList>
            <person name="Fricke W.F."/>
            <person name="Wright M.S."/>
            <person name="Lindell A.H."/>
            <person name="Harkins D.M."/>
            <person name="Baker-Austin C."/>
            <person name="Ravel J."/>
            <person name="Stepanauskas R."/>
        </authorList>
    </citation>
    <scope>NUCLEOTIDE SEQUENCE [LARGE SCALE GENOMIC DNA]</scope>
    <source>
        <strain>SMS-3-5 / SECEC</strain>
    </source>
</reference>